<sequence length="138" mass="15317">MERLVLTLCTLPLAVASAGCATTPARNLSCYQCFKVSSWTECPPTWCSPLDQVCISNEVVVSFKWSVRVLLSKRCAPRCPNDNMKFEWSPAPMVQGVITRRCCSWALCNRALTPQEGRWALRGGLLLQVGLSLLRALL</sequence>
<dbReference type="EMBL" id="AC083982">
    <property type="status" value="NOT_ANNOTATED_CDS"/>
    <property type="molecule type" value="Genomic_DNA"/>
</dbReference>
<dbReference type="EMBL" id="AC236721">
    <property type="status" value="NOT_ANNOTATED_CDS"/>
    <property type="molecule type" value="Genomic_DNA"/>
</dbReference>
<dbReference type="CCDS" id="CCDS94350.1"/>
<dbReference type="RefSeq" id="NP_001355089.1">
    <property type="nucleotide sequence ID" value="NM_001368160.2"/>
</dbReference>
<dbReference type="RefSeq" id="XP_016869619.1">
    <property type="nucleotide sequence ID" value="XM_017014130.1"/>
</dbReference>
<dbReference type="RefSeq" id="XP_016885686.1">
    <property type="nucleotide sequence ID" value="XM_017030197.1"/>
</dbReference>
<dbReference type="RefSeq" id="XP_016885962.1">
    <property type="nucleotide sequence ID" value="XM_017030473.1"/>
</dbReference>
<dbReference type="FunCoup" id="H3BQJ8">
    <property type="interactions" value="30"/>
</dbReference>
<dbReference type="IntAct" id="H3BQJ8">
    <property type="interactions" value="1"/>
</dbReference>
<dbReference type="STRING" id="9606.ENSP00000455811"/>
<dbReference type="GlyCosmos" id="H3BQJ8">
    <property type="glycosylation" value="1 site, No reported glycans"/>
</dbReference>
<dbReference type="GlyGen" id="H3BQJ8">
    <property type="glycosylation" value="1 site"/>
</dbReference>
<dbReference type="BioMuta" id="LY6L"/>
<dbReference type="MassIVE" id="H3BQJ8"/>
<dbReference type="PaxDb" id="9606-ENSP00000455811"/>
<dbReference type="PeptideAtlas" id="H3BQJ8"/>
<dbReference type="Ensembl" id="ENST00000562505.2">
    <property type="protein sequence ID" value="ENSP00000455811.1"/>
    <property type="gene ID" value="ENSG00000261667.2"/>
</dbReference>
<dbReference type="Ensembl" id="ENST00000631950.1">
    <property type="protein sequence ID" value="ENSP00000487842.1"/>
    <property type="gene ID" value="ENSG00000282693.1"/>
</dbReference>
<dbReference type="GeneID" id="101928108"/>
<dbReference type="MANE-Select" id="ENST00000562505.2">
    <property type="protein sequence ID" value="ENSP00000455811.1"/>
    <property type="RefSeq nucleotide sequence ID" value="NM_001368160.2"/>
    <property type="RefSeq protein sequence ID" value="NP_001355089.1"/>
</dbReference>
<dbReference type="UCSC" id="uc064qwu.1">
    <property type="organism name" value="human"/>
</dbReference>
<dbReference type="AGR" id="HGNC:52284"/>
<dbReference type="GeneCards" id="LY6L"/>
<dbReference type="HGNC" id="HGNC:52284">
    <property type="gene designation" value="LY6L"/>
</dbReference>
<dbReference type="HPA" id="ENSG00000261667">
    <property type="expression patterns" value="Group enriched (epididymis, kidney)"/>
</dbReference>
<dbReference type="neXtProt" id="NX_H3BQJ8"/>
<dbReference type="VEuPathDB" id="HostDB:ENSG00000261667"/>
<dbReference type="eggNOG" id="ENOG502TM7T">
    <property type="taxonomic scope" value="Eukaryota"/>
</dbReference>
<dbReference type="GeneTree" id="ENSGT00940000154560"/>
<dbReference type="HOGENOM" id="CLU_106772_1_0_1"/>
<dbReference type="InParanoid" id="H3BQJ8"/>
<dbReference type="OMA" id="PRCPNDN"/>
<dbReference type="OrthoDB" id="9799742at2759"/>
<dbReference type="PAN-GO" id="H3BQJ8">
    <property type="GO annotations" value="1 GO annotation based on evolutionary models"/>
</dbReference>
<dbReference type="PhylomeDB" id="H3BQJ8"/>
<dbReference type="BioGRID-ORCS" id="101928108">
    <property type="hits" value="0 hits in 13 CRISPR screens"/>
</dbReference>
<dbReference type="Pharos" id="H3BQJ8">
    <property type="development level" value="Tdark"/>
</dbReference>
<dbReference type="PRO" id="PR:H3BQJ8"/>
<dbReference type="Proteomes" id="UP000005640">
    <property type="component" value="Chromosome 8"/>
</dbReference>
<dbReference type="RNAct" id="H3BQJ8">
    <property type="molecule type" value="protein"/>
</dbReference>
<dbReference type="Bgee" id="ENSG00000261667">
    <property type="expression patterns" value="Expressed in primordial germ cell in gonad and 12 other cell types or tissues"/>
</dbReference>
<dbReference type="GO" id="GO:0005886">
    <property type="term" value="C:plasma membrane"/>
    <property type="evidence" value="ECO:0000318"/>
    <property type="project" value="GO_Central"/>
</dbReference>
<dbReference type="GO" id="GO:0098552">
    <property type="term" value="C:side of membrane"/>
    <property type="evidence" value="ECO:0007669"/>
    <property type="project" value="UniProtKB-KW"/>
</dbReference>
<dbReference type="CDD" id="cd23551">
    <property type="entry name" value="TFP_LU_ECD_Ly6L"/>
    <property type="match status" value="1"/>
</dbReference>
<dbReference type="Gene3D" id="2.10.60.10">
    <property type="entry name" value="CD59"/>
    <property type="match status" value="1"/>
</dbReference>
<dbReference type="InterPro" id="IPR016054">
    <property type="entry name" value="LY6_UPA_recep-like"/>
</dbReference>
<dbReference type="InterPro" id="IPR051445">
    <property type="entry name" value="LY6H/LY6L_nAChR_modulators"/>
</dbReference>
<dbReference type="InterPro" id="IPR045860">
    <property type="entry name" value="Snake_toxin-like_sf"/>
</dbReference>
<dbReference type="PANTHER" id="PTHR32217">
    <property type="entry name" value="LYMPHOCYTE ANTIGEN 6H"/>
    <property type="match status" value="1"/>
</dbReference>
<dbReference type="PANTHER" id="PTHR32217:SF2">
    <property type="entry name" value="LYMPHOCYTE ANTIGEN 6L"/>
    <property type="match status" value="1"/>
</dbReference>
<dbReference type="Pfam" id="PF00021">
    <property type="entry name" value="UPAR_LY6"/>
    <property type="match status" value="1"/>
</dbReference>
<dbReference type="SMART" id="SM00134">
    <property type="entry name" value="LU"/>
    <property type="match status" value="1"/>
</dbReference>
<dbReference type="SUPFAM" id="SSF57302">
    <property type="entry name" value="Snake toxin-like"/>
    <property type="match status" value="1"/>
</dbReference>
<evidence type="ECO:0000250" key="1">
    <source>
        <dbReference type="UniProtKB" id="Q03405"/>
    </source>
</evidence>
<evidence type="ECO:0000255" key="2"/>
<evidence type="ECO:0000305" key="3"/>
<evidence type="ECO:0000312" key="4">
    <source>
        <dbReference type="HGNC" id="HGNC:52284"/>
    </source>
</evidence>
<reference key="1">
    <citation type="journal article" date="2006" name="Nature">
        <title>DNA sequence and analysis of human chromosome 8.</title>
        <authorList>
            <person name="Nusbaum C."/>
            <person name="Mikkelsen T.S."/>
            <person name="Zody M.C."/>
            <person name="Asakawa S."/>
            <person name="Taudien S."/>
            <person name="Garber M."/>
            <person name="Kodira C.D."/>
            <person name="Schueler M.G."/>
            <person name="Shimizu A."/>
            <person name="Whittaker C.A."/>
            <person name="Chang J.L."/>
            <person name="Cuomo C.A."/>
            <person name="Dewar K."/>
            <person name="FitzGerald M.G."/>
            <person name="Yang X."/>
            <person name="Allen N.R."/>
            <person name="Anderson S."/>
            <person name="Asakawa T."/>
            <person name="Blechschmidt K."/>
            <person name="Bloom T."/>
            <person name="Borowsky M.L."/>
            <person name="Butler J."/>
            <person name="Cook A."/>
            <person name="Corum B."/>
            <person name="DeArellano K."/>
            <person name="DeCaprio D."/>
            <person name="Dooley K.T."/>
            <person name="Dorris L. III"/>
            <person name="Engels R."/>
            <person name="Gloeckner G."/>
            <person name="Hafez N."/>
            <person name="Hagopian D.S."/>
            <person name="Hall J.L."/>
            <person name="Ishikawa S.K."/>
            <person name="Jaffe D.B."/>
            <person name="Kamat A."/>
            <person name="Kudoh J."/>
            <person name="Lehmann R."/>
            <person name="Lokitsang T."/>
            <person name="Macdonald P."/>
            <person name="Major J.E."/>
            <person name="Matthews C.D."/>
            <person name="Mauceli E."/>
            <person name="Menzel U."/>
            <person name="Mihalev A.H."/>
            <person name="Minoshima S."/>
            <person name="Murayama Y."/>
            <person name="Naylor J.W."/>
            <person name="Nicol R."/>
            <person name="Nguyen C."/>
            <person name="O'Leary S.B."/>
            <person name="O'Neill K."/>
            <person name="Parker S.C.J."/>
            <person name="Polley A."/>
            <person name="Raymond C.K."/>
            <person name="Reichwald K."/>
            <person name="Rodriguez J."/>
            <person name="Sasaki T."/>
            <person name="Schilhabel M."/>
            <person name="Siddiqui R."/>
            <person name="Smith C.L."/>
            <person name="Sneddon T.P."/>
            <person name="Talamas J.A."/>
            <person name="Tenzin P."/>
            <person name="Topham K."/>
            <person name="Venkataraman V."/>
            <person name="Wen G."/>
            <person name="Yamazaki S."/>
            <person name="Young S.K."/>
            <person name="Zeng Q."/>
            <person name="Zimmer A.R."/>
            <person name="Rosenthal A."/>
            <person name="Birren B.W."/>
            <person name="Platzer M."/>
            <person name="Shimizu N."/>
            <person name="Lander E.S."/>
        </authorList>
    </citation>
    <scope>NUCLEOTIDE SEQUENCE [LARGE SCALE GENOMIC DNA]</scope>
</reference>
<keyword id="KW-1003">Cell membrane</keyword>
<keyword id="KW-1015">Disulfide bond</keyword>
<keyword id="KW-0325">Glycoprotein</keyword>
<keyword id="KW-0336">GPI-anchor</keyword>
<keyword id="KW-0449">Lipoprotein</keyword>
<keyword id="KW-0472">Membrane</keyword>
<keyword id="KW-1267">Proteomics identification</keyword>
<keyword id="KW-1185">Reference proteome</keyword>
<keyword id="KW-0732">Signal</keyword>
<protein>
    <recommendedName>
        <fullName evidence="3">Lymphocyte antigen 6L</fullName>
    </recommendedName>
    <alternativeName>
        <fullName evidence="4">Lymphocyte antigen 6 complex locus protein L</fullName>
    </alternativeName>
</protein>
<comment type="subcellular location">
    <subcellularLocation>
        <location evidence="2">Cell membrane</location>
        <topology evidence="2">Lipid-anchor</topology>
        <topology evidence="2">GPI-anchor</topology>
    </subcellularLocation>
</comment>
<accession>H3BQJ8</accession>
<name>LY6L_HUMAN</name>
<organism>
    <name type="scientific">Homo sapiens</name>
    <name type="common">Human</name>
    <dbReference type="NCBI Taxonomy" id="9606"/>
    <lineage>
        <taxon>Eukaryota</taxon>
        <taxon>Metazoa</taxon>
        <taxon>Chordata</taxon>
        <taxon>Craniata</taxon>
        <taxon>Vertebrata</taxon>
        <taxon>Euteleostomi</taxon>
        <taxon>Mammalia</taxon>
        <taxon>Eutheria</taxon>
        <taxon>Euarchontoglires</taxon>
        <taxon>Primates</taxon>
        <taxon>Haplorrhini</taxon>
        <taxon>Catarrhini</taxon>
        <taxon>Hominidae</taxon>
        <taxon>Homo</taxon>
    </lineage>
</organism>
<proteinExistence type="evidence at protein level"/>
<gene>
    <name evidence="4" type="primary">LY6L</name>
</gene>
<feature type="signal peptide" evidence="2">
    <location>
        <begin position="1"/>
        <end position="16"/>
    </location>
</feature>
<feature type="chain" id="PRO_5008163148" description="Lymphocyte antigen 6L" evidence="3">
    <location>
        <begin position="17"/>
        <end position="117"/>
    </location>
</feature>
<feature type="propeptide" id="PRO_0000438094" description="Removed in mature form" evidence="3">
    <location>
        <begin position="118"/>
        <end position="138"/>
    </location>
</feature>
<feature type="domain" description="UPAR/Ly6" evidence="2">
    <location>
        <begin position="28"/>
        <end position="122"/>
    </location>
</feature>
<feature type="lipid moiety-binding region" description="GPI-anchor amidated glycine" evidence="2">
    <location>
        <position position="117"/>
    </location>
</feature>
<feature type="glycosylation site" description="N-linked (GlcNAc...) asparagine" evidence="2">
    <location>
        <position position="27"/>
    </location>
</feature>
<feature type="disulfide bond" evidence="1">
    <location>
        <begin position="30"/>
        <end position="47"/>
    </location>
</feature>
<feature type="disulfide bond" evidence="1">
    <location>
        <begin position="103"/>
        <end position="108"/>
    </location>
</feature>